<accession>P76091</accession>
<accession>P78229</accession>
<reference key="1">
    <citation type="journal article" date="1997" name="Science">
        <title>The complete genome sequence of Escherichia coli K-12.</title>
        <authorList>
            <person name="Blattner F.R."/>
            <person name="Plunkett G. III"/>
            <person name="Bloch C.A."/>
            <person name="Perna N.T."/>
            <person name="Burland V."/>
            <person name="Riley M."/>
            <person name="Collado-Vides J."/>
            <person name="Glasner J.D."/>
            <person name="Rode C.K."/>
            <person name="Mayhew G.F."/>
            <person name="Gregor J."/>
            <person name="Davis N.W."/>
            <person name="Kirkpatrick H.A."/>
            <person name="Goeden M.A."/>
            <person name="Rose D.J."/>
            <person name="Mau B."/>
            <person name="Shao Y."/>
        </authorList>
    </citation>
    <scope>NUCLEOTIDE SEQUENCE [LARGE SCALE GENOMIC DNA]</scope>
    <source>
        <strain>K12 / MG1655 / ATCC 47076</strain>
    </source>
</reference>
<reference key="2">
    <citation type="journal article" date="2006" name="Mol. Syst. Biol.">
        <title>Highly accurate genome sequences of Escherichia coli K-12 strains MG1655 and W3110.</title>
        <authorList>
            <person name="Hayashi K."/>
            <person name="Morooka N."/>
            <person name="Yamamoto Y."/>
            <person name="Fujita K."/>
            <person name="Isono K."/>
            <person name="Choi S."/>
            <person name="Ohtsubo E."/>
            <person name="Baba T."/>
            <person name="Wanner B.L."/>
            <person name="Mori H."/>
            <person name="Horiuchi T."/>
        </authorList>
    </citation>
    <scope>NUCLEOTIDE SEQUENCE [LARGE SCALE GENOMIC DNA]</scope>
    <scope>SEQUENCE REVISION TO 187 AND 190</scope>
    <source>
        <strain>K12 / W3110 / ATCC 27325 / DSM 5911</strain>
    </source>
</reference>
<reference key="3">
    <citation type="journal article" date="1996" name="DNA Res.">
        <title>A 570-kb DNA sequence of the Escherichia coli K-12 genome corresponding to the 28.0-40.1 min region on the linkage map.</title>
        <authorList>
            <person name="Aiba H."/>
            <person name="Baba T."/>
            <person name="Fujita K."/>
            <person name="Hayashi K."/>
            <person name="Inada T."/>
            <person name="Isono K."/>
            <person name="Itoh T."/>
            <person name="Kasai H."/>
            <person name="Kashimoto K."/>
            <person name="Kimura S."/>
            <person name="Kitakawa M."/>
            <person name="Kitagawa M."/>
            <person name="Makino K."/>
            <person name="Miki T."/>
            <person name="Mizobuchi K."/>
            <person name="Mori H."/>
            <person name="Mori T."/>
            <person name="Motomura K."/>
            <person name="Nakade S."/>
            <person name="Nakamura Y."/>
            <person name="Nashimoto H."/>
            <person name="Nishio Y."/>
            <person name="Oshima T."/>
            <person name="Saito N."/>
            <person name="Sampei G."/>
            <person name="Seki Y."/>
            <person name="Sivasundaram S."/>
            <person name="Tagami H."/>
            <person name="Takeda J."/>
            <person name="Takemoto K."/>
            <person name="Takeuchi Y."/>
            <person name="Wada C."/>
            <person name="Yamamoto Y."/>
            <person name="Horiuchi T."/>
        </authorList>
    </citation>
    <scope>NUCLEOTIDE SEQUENCE [LARGE SCALE GENOMIC DNA] OF 187-298</scope>
    <source>
        <strain>K12 / W3110 / ATCC 27325 / DSM 5911</strain>
    </source>
</reference>
<evidence type="ECO:0000255" key="1"/>
<evidence type="ECO:0000305" key="2"/>
<keyword id="KW-1003">Cell membrane</keyword>
<keyword id="KW-0472">Membrane</keyword>
<keyword id="KW-1185">Reference proteome</keyword>
<keyword id="KW-0808">Transferase</keyword>
<keyword id="KW-0812">Transmembrane</keyword>
<keyword id="KW-1133">Transmembrane helix</keyword>
<name>YNBB_ECOLI</name>
<comment type="subcellular location">
    <subcellularLocation>
        <location evidence="2">Cell membrane</location>
        <topology evidence="2">Multi-pass membrane protein</topology>
    </subcellularLocation>
</comment>
<comment type="similarity">
    <text evidence="2">Belongs to the CDS family.</text>
</comment>
<sequence>MLEKSLATLFALLILATLINRFLLWRLPERKGGEVTLRIRTWWGIVICFSMVISGPRWMTLTFFALISFLALKEYCTLISVHFPRWLYWGIPLNYLLIGFNCFELFLLFIPLAGFLILATGQVLVGDPSGFLHTVSAIFWGWIMTVFALSHAAWLLMLPTTNIQGGALLVLFLLALTESNDIAQYLWGKSCGRRKVVPKVSPGKTLEGLMGGVITIMIASLIIGPLLTPLNTLQALLAGLLIGISGFCGDVVMSAIKRDIGVKDSGKLLPGHGGLLDRIDSLIFTAPVFFYFIRYCCY</sequence>
<organism>
    <name type="scientific">Escherichia coli (strain K12)</name>
    <dbReference type="NCBI Taxonomy" id="83333"/>
    <lineage>
        <taxon>Bacteria</taxon>
        <taxon>Pseudomonadati</taxon>
        <taxon>Pseudomonadota</taxon>
        <taxon>Gammaproteobacteria</taxon>
        <taxon>Enterobacterales</taxon>
        <taxon>Enterobacteriaceae</taxon>
        <taxon>Escherichia</taxon>
    </lineage>
</organism>
<protein>
    <recommendedName>
        <fullName>Uncharacterized protein YnbB</fullName>
    </recommendedName>
</protein>
<feature type="chain" id="PRO_0000090759" description="Uncharacterized protein YnbB">
    <location>
        <begin position="1"/>
        <end position="298"/>
    </location>
</feature>
<feature type="transmembrane region" description="Helical" evidence="1">
    <location>
        <begin position="5"/>
        <end position="25"/>
    </location>
</feature>
<feature type="transmembrane region" description="Helical" evidence="1">
    <location>
        <begin position="52"/>
        <end position="72"/>
    </location>
</feature>
<feature type="transmembrane region" description="Helical" evidence="1">
    <location>
        <begin position="105"/>
        <end position="125"/>
    </location>
</feature>
<feature type="transmembrane region" description="Helical" evidence="1">
    <location>
        <begin position="138"/>
        <end position="158"/>
    </location>
</feature>
<feature type="transmembrane region" description="Helical" evidence="1">
    <location>
        <begin position="163"/>
        <end position="183"/>
    </location>
</feature>
<feature type="transmembrane region" description="Helical" evidence="1">
    <location>
        <begin position="208"/>
        <end position="228"/>
    </location>
</feature>
<feature type="transmembrane region" description="Helical" evidence="1">
    <location>
        <begin position="236"/>
        <end position="256"/>
    </location>
</feature>
<feature type="transmembrane region" description="Helical" evidence="1">
    <location>
        <begin position="273"/>
        <end position="293"/>
    </location>
</feature>
<feature type="sequence conflict" description="In Ref. 3." evidence="2" ref="3">
    <original>W</original>
    <variation>M</variation>
    <location>
        <position position="187"/>
    </location>
</feature>
<feature type="sequence conflict" description="In Ref. 3." evidence="2" ref="3">
    <original>S</original>
    <variation>I</variation>
    <location>
        <position position="190"/>
    </location>
</feature>
<gene>
    <name type="primary">ynbB</name>
    <name type="ordered locus">b1409</name>
    <name type="ordered locus">JW1406</name>
</gene>
<proteinExistence type="inferred from homology"/>
<dbReference type="EMBL" id="U00096">
    <property type="protein sequence ID" value="AAC74491.1"/>
    <property type="molecule type" value="Genomic_DNA"/>
</dbReference>
<dbReference type="EMBL" id="AP009048">
    <property type="protein sequence ID" value="BAA15023.2"/>
    <property type="molecule type" value="Genomic_DNA"/>
</dbReference>
<dbReference type="PIR" id="D64892">
    <property type="entry name" value="D64892"/>
</dbReference>
<dbReference type="RefSeq" id="NP_415927.1">
    <property type="nucleotide sequence ID" value="NC_000913.3"/>
</dbReference>
<dbReference type="RefSeq" id="WP_000890941.1">
    <property type="nucleotide sequence ID" value="NZ_SSZK01000021.1"/>
</dbReference>
<dbReference type="SMR" id="P76091"/>
<dbReference type="BioGRID" id="4263022">
    <property type="interactions" value="300"/>
</dbReference>
<dbReference type="DIP" id="DIP-12743N"/>
<dbReference type="FunCoup" id="P76091">
    <property type="interactions" value="511"/>
</dbReference>
<dbReference type="IntAct" id="P76091">
    <property type="interactions" value="1"/>
</dbReference>
<dbReference type="STRING" id="511145.b1409"/>
<dbReference type="PaxDb" id="511145-b1409"/>
<dbReference type="EnsemblBacteria" id="AAC74491">
    <property type="protein sequence ID" value="AAC74491"/>
    <property type="gene ID" value="b1409"/>
</dbReference>
<dbReference type="GeneID" id="945972"/>
<dbReference type="KEGG" id="ecj:JW1406"/>
<dbReference type="KEGG" id="eco:b1409"/>
<dbReference type="KEGG" id="ecoc:C3026_08210"/>
<dbReference type="PATRIC" id="fig|1411691.4.peg.862"/>
<dbReference type="EchoBASE" id="EB3512"/>
<dbReference type="eggNOG" id="COG4589">
    <property type="taxonomic scope" value="Bacteria"/>
</dbReference>
<dbReference type="HOGENOM" id="CLU_037294_3_0_6"/>
<dbReference type="InParanoid" id="P76091"/>
<dbReference type="OMA" id="QYVWGKL"/>
<dbReference type="OrthoDB" id="9799199at2"/>
<dbReference type="PhylomeDB" id="P76091"/>
<dbReference type="BioCyc" id="EcoCyc:G6728-MONOMER"/>
<dbReference type="PRO" id="PR:P76091"/>
<dbReference type="Proteomes" id="UP000000625">
    <property type="component" value="Chromosome"/>
</dbReference>
<dbReference type="GO" id="GO:0005886">
    <property type="term" value="C:plasma membrane"/>
    <property type="evidence" value="ECO:0000314"/>
    <property type="project" value="EcoCyc"/>
</dbReference>
<dbReference type="GO" id="GO:0016772">
    <property type="term" value="F:transferase activity, transferring phosphorus-containing groups"/>
    <property type="evidence" value="ECO:0007669"/>
    <property type="project" value="InterPro"/>
</dbReference>
<dbReference type="GO" id="GO:0009273">
    <property type="term" value="P:peptidoglycan-based cell wall biogenesis"/>
    <property type="evidence" value="ECO:0000315"/>
    <property type="project" value="EcoCyc"/>
</dbReference>
<dbReference type="InterPro" id="IPR000374">
    <property type="entry name" value="PC_trans"/>
</dbReference>
<dbReference type="PANTHER" id="PTHR43535">
    <property type="entry name" value="PHOSPHATIDATE CYTIDYLYLTRANSFERASE"/>
    <property type="match status" value="1"/>
</dbReference>
<dbReference type="PANTHER" id="PTHR43535:SF1">
    <property type="entry name" value="PHOSPHATIDATE CYTIDYLYLTRANSFERASE"/>
    <property type="match status" value="1"/>
</dbReference>
<dbReference type="Pfam" id="PF01148">
    <property type="entry name" value="CTP_transf_1"/>
    <property type="match status" value="1"/>
</dbReference>
<dbReference type="PROSITE" id="PS01315">
    <property type="entry name" value="CDS"/>
    <property type="match status" value="1"/>
</dbReference>